<dbReference type="EC" id="7.1.1.-" evidence="1"/>
<dbReference type="EMBL" id="EF380351">
    <property type="protein sequence ID" value="ABQ45293.1"/>
    <property type="molecule type" value="Genomic_DNA"/>
</dbReference>
<dbReference type="SMR" id="P0CC36"/>
<dbReference type="GO" id="GO:0009535">
    <property type="term" value="C:chloroplast thylakoid membrane"/>
    <property type="evidence" value="ECO:0007669"/>
    <property type="project" value="UniProtKB-SubCell"/>
</dbReference>
<dbReference type="GO" id="GO:0008137">
    <property type="term" value="F:NADH dehydrogenase (ubiquinone) activity"/>
    <property type="evidence" value="ECO:0007669"/>
    <property type="project" value="InterPro"/>
</dbReference>
<dbReference type="GO" id="GO:0048038">
    <property type="term" value="F:quinone binding"/>
    <property type="evidence" value="ECO:0007669"/>
    <property type="project" value="UniProtKB-KW"/>
</dbReference>
<dbReference type="GO" id="GO:0042773">
    <property type="term" value="P:ATP synthesis coupled electron transport"/>
    <property type="evidence" value="ECO:0007669"/>
    <property type="project" value="InterPro"/>
</dbReference>
<dbReference type="GO" id="GO:0019684">
    <property type="term" value="P:photosynthesis, light reaction"/>
    <property type="evidence" value="ECO:0007669"/>
    <property type="project" value="UniProtKB-UniRule"/>
</dbReference>
<dbReference type="HAMAP" id="MF_00445">
    <property type="entry name" value="NDH1_NuoN_1"/>
    <property type="match status" value="1"/>
</dbReference>
<dbReference type="InterPro" id="IPR010096">
    <property type="entry name" value="NADH-Q_OxRdtase_suN/2"/>
</dbReference>
<dbReference type="InterPro" id="IPR001750">
    <property type="entry name" value="ND/Mrp_TM"/>
</dbReference>
<dbReference type="InterPro" id="IPR045693">
    <property type="entry name" value="Ndh2_N"/>
</dbReference>
<dbReference type="NCBIfam" id="TIGR01770">
    <property type="entry name" value="NDH_I_N"/>
    <property type="match status" value="1"/>
</dbReference>
<dbReference type="NCBIfam" id="NF002701">
    <property type="entry name" value="PRK02504.1"/>
    <property type="match status" value="1"/>
</dbReference>
<dbReference type="PANTHER" id="PTHR22773">
    <property type="entry name" value="NADH DEHYDROGENASE"/>
    <property type="match status" value="1"/>
</dbReference>
<dbReference type="Pfam" id="PF19530">
    <property type="entry name" value="Ndh2_N"/>
    <property type="match status" value="1"/>
</dbReference>
<dbReference type="Pfam" id="PF00361">
    <property type="entry name" value="Proton_antipo_M"/>
    <property type="match status" value="1"/>
</dbReference>
<dbReference type="PRINTS" id="PR01434">
    <property type="entry name" value="NADHDHGNASE5"/>
</dbReference>
<sequence length="510" mass="56694">MIWHVQNENFILDSTRIFMKAFHLLLFHGSFIFPECILIFGLILLLMIDSTSDQKDIPWLYFISSTSLVISITALLFRWREEPMISFSGNFQTNNFNEIFQFLILLCSTLCIPLSVEYIECTEMAITEFLLFVLTATLGGMFLCGANDLITIFVAPECFSLCSYLLSGYTKRDVRSNEATTKYLLMGGASSSILVHGFSWLYGSSGGEIELQEIVNGLINTQMYNSPGISIALIFITVGIGFKLSPAPSHQWTPDVYEGSPTPVVAFLSVTSKVAASASATRIFDIPFYFSSNEWHLHLEILAILSMILGNLIAITQTSMKRMLAYSSIGQIGYVIIGIIVGDSNDGYASMITYMLFYISMNLGTFARIVSFGLRTGTDNIRDYAGLYTKDPFLALSLALCLLSLGGLPPLAGFFGKLHLFWCGWQAGLYFLVSIGLLTSVVSIYYYLKIIKLLMTGRNQEITPHVRNYRRSPLRSNNSIELSMIVCVIASTIPGISMNPIIAIAQDTLF</sequence>
<organism>
    <name type="scientific">Buxus microphylla</name>
    <name type="common">Littleleaf boxwood</name>
    <name type="synonym">Japanese boxwood</name>
    <dbReference type="NCBI Taxonomy" id="153571"/>
    <lineage>
        <taxon>Eukaryota</taxon>
        <taxon>Viridiplantae</taxon>
        <taxon>Streptophyta</taxon>
        <taxon>Embryophyta</taxon>
        <taxon>Tracheophyta</taxon>
        <taxon>Spermatophyta</taxon>
        <taxon>Magnoliopsida</taxon>
        <taxon>Buxales</taxon>
        <taxon>Buxaceae</taxon>
        <taxon>Buxus</taxon>
    </lineage>
</organism>
<reference key="1">
    <citation type="journal article" date="2007" name="Mol. Phylogenet. Evol.">
        <title>Phylogenetic and evolutionary implications of complete chloroplast genome sequences of four early-diverging angiosperms: Buxus (Buxaceae), Chloranthus (Chloranthaceae), Dioscorea (Dioscoreaceae), and Illicium (Schisandraceae).</title>
        <authorList>
            <person name="Hansen D.R."/>
            <person name="Dastidar S.G."/>
            <person name="Cai Z."/>
            <person name="Penaflor C."/>
            <person name="Kuehl J.V."/>
            <person name="Boore J.L."/>
            <person name="Jansen R.K."/>
        </authorList>
    </citation>
    <scope>NUCLEOTIDE SEQUENCE [LARGE SCALE GENOMIC DNA]</scope>
</reference>
<name>NU2C1_BUXMI</name>
<keyword id="KW-0150">Chloroplast</keyword>
<keyword id="KW-0472">Membrane</keyword>
<keyword id="KW-0520">NAD</keyword>
<keyword id="KW-0521">NADP</keyword>
<keyword id="KW-0934">Plastid</keyword>
<keyword id="KW-0618">Plastoquinone</keyword>
<keyword id="KW-0874">Quinone</keyword>
<keyword id="KW-0793">Thylakoid</keyword>
<keyword id="KW-1278">Translocase</keyword>
<keyword id="KW-0812">Transmembrane</keyword>
<keyword id="KW-1133">Transmembrane helix</keyword>
<keyword id="KW-0813">Transport</keyword>
<gene>
    <name evidence="1" type="primary">ndhB1</name>
</gene>
<accession>P0CC36</accession>
<accession>A6MM81</accession>
<protein>
    <recommendedName>
        <fullName evidence="1">NAD(P)H-quinone oxidoreductase subunit 2 A, chloroplastic</fullName>
        <ecNumber evidence="1">7.1.1.-</ecNumber>
    </recommendedName>
    <alternativeName>
        <fullName evidence="1">NAD(P)H dehydrogenase, subunit 2 A</fullName>
    </alternativeName>
    <alternativeName>
        <fullName evidence="1">NADH-plastoquinone oxidoreductase subunit 2 A</fullName>
    </alternativeName>
</protein>
<comment type="function">
    <text evidence="1">NDH shuttles electrons from NAD(P)H:plastoquinone, via FMN and iron-sulfur (Fe-S) centers, to quinones in the photosynthetic chain and possibly in a chloroplast respiratory chain. The immediate electron acceptor for the enzyme in this species is believed to be plastoquinone. Couples the redox reaction to proton translocation, and thus conserves the redox energy in a proton gradient.</text>
</comment>
<comment type="catalytic activity">
    <reaction evidence="1">
        <text>a plastoquinone + NADH + (n+1) H(+)(in) = a plastoquinol + NAD(+) + n H(+)(out)</text>
        <dbReference type="Rhea" id="RHEA:42608"/>
        <dbReference type="Rhea" id="RHEA-COMP:9561"/>
        <dbReference type="Rhea" id="RHEA-COMP:9562"/>
        <dbReference type="ChEBI" id="CHEBI:15378"/>
        <dbReference type="ChEBI" id="CHEBI:17757"/>
        <dbReference type="ChEBI" id="CHEBI:57540"/>
        <dbReference type="ChEBI" id="CHEBI:57945"/>
        <dbReference type="ChEBI" id="CHEBI:62192"/>
    </reaction>
</comment>
<comment type="catalytic activity">
    <reaction evidence="1">
        <text>a plastoquinone + NADPH + (n+1) H(+)(in) = a plastoquinol + NADP(+) + n H(+)(out)</text>
        <dbReference type="Rhea" id="RHEA:42612"/>
        <dbReference type="Rhea" id="RHEA-COMP:9561"/>
        <dbReference type="Rhea" id="RHEA-COMP:9562"/>
        <dbReference type="ChEBI" id="CHEBI:15378"/>
        <dbReference type="ChEBI" id="CHEBI:17757"/>
        <dbReference type="ChEBI" id="CHEBI:57783"/>
        <dbReference type="ChEBI" id="CHEBI:58349"/>
        <dbReference type="ChEBI" id="CHEBI:62192"/>
    </reaction>
</comment>
<comment type="subunit">
    <text evidence="1">NDH is composed of at least 16 different subunits, 5 of which are encoded in the nucleus.</text>
</comment>
<comment type="subcellular location">
    <subcellularLocation>
        <location evidence="1">Plastid</location>
        <location evidence="1">Chloroplast thylakoid membrane</location>
        <topology evidence="1">Multi-pass membrane protein</topology>
    </subcellularLocation>
</comment>
<comment type="similarity">
    <text evidence="1">Belongs to the complex I subunit 2 family.</text>
</comment>
<geneLocation type="chloroplast"/>
<evidence type="ECO:0000255" key="1">
    <source>
        <dbReference type="HAMAP-Rule" id="MF_00445"/>
    </source>
</evidence>
<proteinExistence type="inferred from homology"/>
<feature type="chain" id="PRO_0000344260" description="NAD(P)H-quinone oxidoreductase subunit 2 A, chloroplastic">
    <location>
        <begin position="1"/>
        <end position="510"/>
    </location>
</feature>
<feature type="transmembrane region" description="Helical" evidence="1">
    <location>
        <begin position="24"/>
        <end position="44"/>
    </location>
</feature>
<feature type="transmembrane region" description="Helical" evidence="1">
    <location>
        <begin position="57"/>
        <end position="77"/>
    </location>
</feature>
<feature type="transmembrane region" description="Helical" evidence="1">
    <location>
        <begin position="99"/>
        <end position="119"/>
    </location>
</feature>
<feature type="transmembrane region" description="Helical" evidence="1">
    <location>
        <begin position="124"/>
        <end position="144"/>
    </location>
</feature>
<feature type="transmembrane region" description="Helical" evidence="1">
    <location>
        <begin position="149"/>
        <end position="169"/>
    </location>
</feature>
<feature type="transmembrane region" description="Helical" evidence="1">
    <location>
        <begin position="183"/>
        <end position="203"/>
    </location>
</feature>
<feature type="transmembrane region" description="Helical" evidence="1">
    <location>
        <begin position="227"/>
        <end position="247"/>
    </location>
</feature>
<feature type="transmembrane region" description="Helical" evidence="1">
    <location>
        <begin position="295"/>
        <end position="315"/>
    </location>
</feature>
<feature type="transmembrane region" description="Helical" evidence="1">
    <location>
        <begin position="323"/>
        <end position="343"/>
    </location>
</feature>
<feature type="transmembrane region" description="Helical" evidence="1">
    <location>
        <begin position="347"/>
        <end position="367"/>
    </location>
</feature>
<feature type="transmembrane region" description="Helical" evidence="1">
    <location>
        <begin position="395"/>
        <end position="415"/>
    </location>
</feature>
<feature type="transmembrane region" description="Helical" evidence="1">
    <location>
        <begin position="418"/>
        <end position="438"/>
    </location>
</feature>
<feature type="transmembrane region" description="Helical" evidence="1">
    <location>
        <begin position="484"/>
        <end position="504"/>
    </location>
</feature>